<reference key="1">
    <citation type="journal article" date="1991" name="Gene">
        <title>Nucleotide sequence analysis of a chloramphenicol-resistance determinant from Agrobacterium tumefaciens and identification of its gene product.</title>
        <authorList>
            <person name="Tennigkeit J."/>
            <person name="Matzura H."/>
        </authorList>
    </citation>
    <scope>NUCLEOTIDE SEQUENCE [GENOMIC DNA]</scope>
</reference>
<reference key="2">
    <citation type="journal article" date="2001" name="Science">
        <title>The genome of the natural genetic engineer Agrobacterium tumefaciens C58.</title>
        <authorList>
            <person name="Wood D.W."/>
            <person name="Setubal J.C."/>
            <person name="Kaul R."/>
            <person name="Monks D.E."/>
            <person name="Kitajima J.P."/>
            <person name="Okura V.K."/>
            <person name="Zhou Y."/>
            <person name="Chen L."/>
            <person name="Wood G.E."/>
            <person name="Almeida N.F. Jr."/>
            <person name="Woo L."/>
            <person name="Chen Y."/>
            <person name="Paulsen I.T."/>
            <person name="Eisen J.A."/>
            <person name="Karp P.D."/>
            <person name="Bovee D. Sr."/>
            <person name="Chapman P."/>
            <person name="Clendenning J."/>
            <person name="Deatherage G."/>
            <person name="Gillet W."/>
            <person name="Grant C."/>
            <person name="Kutyavin T."/>
            <person name="Levy R."/>
            <person name="Li M.-J."/>
            <person name="McClelland E."/>
            <person name="Palmieri A."/>
            <person name="Raymond C."/>
            <person name="Rouse G."/>
            <person name="Saenphimmachak C."/>
            <person name="Wu Z."/>
            <person name="Romero P."/>
            <person name="Gordon D."/>
            <person name="Zhang S."/>
            <person name="Yoo H."/>
            <person name="Tao Y."/>
            <person name="Biddle P."/>
            <person name="Jung M."/>
            <person name="Krespan W."/>
            <person name="Perry M."/>
            <person name="Gordon-Kamm B."/>
            <person name="Liao L."/>
            <person name="Kim S."/>
            <person name="Hendrick C."/>
            <person name="Zhao Z.-Y."/>
            <person name="Dolan M."/>
            <person name="Chumley F."/>
            <person name="Tingey S.V."/>
            <person name="Tomb J.-F."/>
            <person name="Gordon M.P."/>
            <person name="Olson M.V."/>
            <person name="Nester E.W."/>
        </authorList>
    </citation>
    <scope>NUCLEOTIDE SEQUENCE [LARGE SCALE GENOMIC DNA]</scope>
    <source>
        <strain>C58 / ATCC 33970</strain>
    </source>
</reference>
<reference key="3">
    <citation type="journal article" date="2001" name="Science">
        <title>Genome sequence of the plant pathogen and biotechnology agent Agrobacterium tumefaciens C58.</title>
        <authorList>
            <person name="Goodner B."/>
            <person name="Hinkle G."/>
            <person name="Gattung S."/>
            <person name="Miller N."/>
            <person name="Blanchard M."/>
            <person name="Qurollo B."/>
            <person name="Goldman B.S."/>
            <person name="Cao Y."/>
            <person name="Askenazi M."/>
            <person name="Halling C."/>
            <person name="Mullin L."/>
            <person name="Houmiel K."/>
            <person name="Gordon J."/>
            <person name="Vaudin M."/>
            <person name="Iartchouk O."/>
            <person name="Epp A."/>
            <person name="Liu F."/>
            <person name="Wollam C."/>
            <person name="Allinger M."/>
            <person name="Doughty D."/>
            <person name="Scott C."/>
            <person name="Lappas C."/>
            <person name="Markelz B."/>
            <person name="Flanagan C."/>
            <person name="Crowell C."/>
            <person name="Gurson J."/>
            <person name="Lomo C."/>
            <person name="Sear C."/>
            <person name="Strub G."/>
            <person name="Cielo C."/>
            <person name="Slater S."/>
        </authorList>
    </citation>
    <scope>NUCLEOTIDE SEQUENCE [LARGE SCALE GENOMIC DNA]</scope>
    <source>
        <strain>C58 / ATCC 33970</strain>
    </source>
</reference>
<dbReference type="EC" id="2.3.1.28"/>
<dbReference type="EMBL" id="M58472">
    <property type="protein sequence ID" value="AAA22081.1"/>
    <property type="molecule type" value="Genomic_DNA"/>
</dbReference>
<dbReference type="EMBL" id="AE007870">
    <property type="protein sequence ID" value="AAK88712.1"/>
    <property type="molecule type" value="Genomic_DNA"/>
</dbReference>
<dbReference type="PIR" id="AF3139">
    <property type="entry name" value="AF3139"/>
</dbReference>
<dbReference type="PIR" id="F98148">
    <property type="entry name" value="F98148"/>
</dbReference>
<dbReference type="PIR" id="JN0132">
    <property type="entry name" value="JN0132"/>
</dbReference>
<dbReference type="RefSeq" id="NP_355927.1">
    <property type="nucleotide sequence ID" value="NC_003063.2"/>
</dbReference>
<dbReference type="RefSeq" id="WP_010974114.1">
    <property type="nucleotide sequence ID" value="NC_003063.2"/>
</dbReference>
<dbReference type="SMR" id="P23364"/>
<dbReference type="STRING" id="176299.Atu4738"/>
<dbReference type="CARD" id="ARO:3004451">
    <property type="molecule name" value="Afab_ACT_CHL"/>
    <property type="mechanism identifier" value="ARO:0001004"/>
    <property type="mechanism name" value="antibiotic inactivation"/>
</dbReference>
<dbReference type="EnsemblBacteria" id="AAK88712">
    <property type="protein sequence ID" value="AAK88712"/>
    <property type="gene ID" value="Atu4738"/>
</dbReference>
<dbReference type="GeneID" id="1136612"/>
<dbReference type="KEGG" id="ag:AAA22081"/>
<dbReference type="KEGG" id="atu:Atu4738"/>
<dbReference type="PATRIC" id="fig|176299.10.peg.4545"/>
<dbReference type="eggNOG" id="COG0110">
    <property type="taxonomic scope" value="Bacteria"/>
</dbReference>
<dbReference type="HOGENOM" id="CLU_051638_5_3_5"/>
<dbReference type="OrthoDB" id="9815592at2"/>
<dbReference type="PhylomeDB" id="P23364"/>
<dbReference type="BioCyc" id="AGRO:ATU4738-MONOMER"/>
<dbReference type="Proteomes" id="UP000000813">
    <property type="component" value="Chromosome linear"/>
</dbReference>
<dbReference type="GO" id="GO:0008811">
    <property type="term" value="F:chloramphenicol O-acetyltransferase activity"/>
    <property type="evidence" value="ECO:0007669"/>
    <property type="project" value="UniProtKB-EC"/>
</dbReference>
<dbReference type="GO" id="GO:0046677">
    <property type="term" value="P:response to antibiotic"/>
    <property type="evidence" value="ECO:0007669"/>
    <property type="project" value="UniProtKB-KW"/>
</dbReference>
<dbReference type="CDD" id="cd03349">
    <property type="entry name" value="LbH_XAT"/>
    <property type="match status" value="1"/>
</dbReference>
<dbReference type="Gene3D" id="2.160.10.10">
    <property type="entry name" value="Hexapeptide repeat proteins"/>
    <property type="match status" value="1"/>
</dbReference>
<dbReference type="InterPro" id="IPR001451">
    <property type="entry name" value="Hexapep"/>
</dbReference>
<dbReference type="InterPro" id="IPR018357">
    <property type="entry name" value="Hexapep_transf_CS"/>
</dbReference>
<dbReference type="InterPro" id="IPR050179">
    <property type="entry name" value="Trans_hexapeptide_repeat"/>
</dbReference>
<dbReference type="InterPro" id="IPR011004">
    <property type="entry name" value="Trimer_LpxA-like_sf"/>
</dbReference>
<dbReference type="NCBIfam" id="NF000490">
    <property type="entry name" value="chloram_CatB"/>
    <property type="match status" value="1"/>
</dbReference>
<dbReference type="PANTHER" id="PTHR43300">
    <property type="entry name" value="ACETYLTRANSFERASE"/>
    <property type="match status" value="1"/>
</dbReference>
<dbReference type="PANTHER" id="PTHR43300:SF12">
    <property type="entry name" value="CHLORAMPHENICOL ACETYLTRANSFERASE"/>
    <property type="match status" value="1"/>
</dbReference>
<dbReference type="Pfam" id="PF00132">
    <property type="entry name" value="Hexapep"/>
    <property type="match status" value="1"/>
</dbReference>
<dbReference type="SUPFAM" id="SSF51161">
    <property type="entry name" value="Trimeric LpxA-like enzymes"/>
    <property type="match status" value="1"/>
</dbReference>
<dbReference type="PROSITE" id="PS00101">
    <property type="entry name" value="HEXAPEP_TRANSFERASES"/>
    <property type="match status" value="1"/>
</dbReference>
<gene>
    <name type="primary">cat</name>
    <name type="ordered locus">Atu4738</name>
    <name type="ORF">AGR_L_286</name>
</gene>
<name>CAT4_AGRFC</name>
<comment type="function">
    <text>This enzyme is an effector of chloramphenicol resistance in bacteria.</text>
</comment>
<comment type="catalytic activity">
    <reaction>
        <text>chloramphenicol + acetyl-CoA = chloramphenicol 3-acetate + CoA</text>
        <dbReference type="Rhea" id="RHEA:18421"/>
        <dbReference type="ChEBI" id="CHEBI:16730"/>
        <dbReference type="ChEBI" id="CHEBI:17698"/>
        <dbReference type="ChEBI" id="CHEBI:57287"/>
        <dbReference type="ChEBI" id="CHEBI:57288"/>
        <dbReference type="EC" id="2.3.1.28"/>
    </reaction>
</comment>
<comment type="similarity">
    <text evidence="2">Belongs to the transferase hexapeptide repeat family.</text>
</comment>
<keyword id="KW-0012">Acyltransferase</keyword>
<keyword id="KW-0046">Antibiotic resistance</keyword>
<keyword id="KW-1185">Reference proteome</keyword>
<keyword id="KW-0677">Repeat</keyword>
<keyword id="KW-0808">Transferase</keyword>
<feature type="chain" id="PRO_0000068657" description="Chloramphenicol acetyltransferase">
    <location>
        <begin position="1"/>
        <end position="209"/>
    </location>
</feature>
<feature type="active site" evidence="1">
    <location>
        <position position="78"/>
    </location>
</feature>
<sequence length="209" mass="23126">MENYFESPFRGITLDKQVKSPNLVVGKYSYYSGYYHGHSFEDCARYLLPDEGADRLVIGSFCSIGSGAAFIMAGNQGHRNEWISTFPFFFMPEVPEFENAANGYLPAGDTVIGNDVWIGSEAIIMPGITVGDGAVIGTRALVTKDVEPYAIVGGNPAKTIRKRFDDDSIALLLEMKWWGWPAERLKAAMPLMTSGNVAALYRFWRSDSL</sequence>
<evidence type="ECO:0000250" key="1"/>
<evidence type="ECO:0000305" key="2"/>
<accession>P23364</accession>
<proteinExistence type="inferred from homology"/>
<organism>
    <name type="scientific">Agrobacterium fabrum (strain C58 / ATCC 33970)</name>
    <name type="common">Agrobacterium tumefaciens (strain C58)</name>
    <dbReference type="NCBI Taxonomy" id="176299"/>
    <lineage>
        <taxon>Bacteria</taxon>
        <taxon>Pseudomonadati</taxon>
        <taxon>Pseudomonadota</taxon>
        <taxon>Alphaproteobacteria</taxon>
        <taxon>Hyphomicrobiales</taxon>
        <taxon>Rhizobiaceae</taxon>
        <taxon>Rhizobium/Agrobacterium group</taxon>
        <taxon>Agrobacterium</taxon>
        <taxon>Agrobacterium tumefaciens complex</taxon>
    </lineage>
</organism>
<protein>
    <recommendedName>
        <fullName>Chloramphenicol acetyltransferase</fullName>
        <ecNumber>2.3.1.28</ecNumber>
    </recommendedName>
</protein>